<feature type="chain" id="PRO_0000409511" description="Poly [ADP-ribose] polymerase tankyrase-1">
    <location>
        <begin position="1"/>
        <end position="1320"/>
    </location>
</feature>
<feature type="repeat" description="ANK 1">
    <location>
        <begin position="174"/>
        <end position="202"/>
    </location>
</feature>
<feature type="repeat" description="ANK 2">
    <location>
        <begin position="208"/>
        <end position="237"/>
    </location>
</feature>
<feature type="repeat" description="ANK 3">
    <location>
        <begin position="241"/>
        <end position="270"/>
    </location>
</feature>
<feature type="repeat" description="ANK 4">
    <location>
        <begin position="274"/>
        <end position="303"/>
    </location>
</feature>
<feature type="repeat" description="ANK 5">
    <location>
        <begin position="361"/>
        <end position="390"/>
    </location>
</feature>
<feature type="repeat" description="ANK 6">
    <location>
        <begin position="394"/>
        <end position="423"/>
    </location>
</feature>
<feature type="repeat" description="ANK 7">
    <location>
        <begin position="427"/>
        <end position="456"/>
    </location>
</feature>
<feature type="repeat" description="ANK 8">
    <location>
        <begin position="514"/>
        <end position="546"/>
    </location>
</feature>
<feature type="repeat" description="ANK 9">
    <location>
        <begin position="550"/>
        <end position="579"/>
    </location>
</feature>
<feature type="repeat" description="ANK 10">
    <location>
        <begin position="583"/>
        <end position="612"/>
    </location>
</feature>
<feature type="repeat" description="ANK 11">
    <location>
        <begin position="676"/>
        <end position="705"/>
    </location>
</feature>
<feature type="repeat" description="ANK 12">
    <location>
        <begin position="709"/>
        <end position="738"/>
    </location>
</feature>
<feature type="repeat" description="ANK 13">
    <location>
        <begin position="742"/>
        <end position="771"/>
    </location>
</feature>
<feature type="repeat" description="ANK 14">
    <location>
        <begin position="775"/>
        <end position="803"/>
    </location>
</feature>
<feature type="repeat" description="ANK 15">
    <location>
        <begin position="829"/>
        <end position="858"/>
    </location>
</feature>
<feature type="repeat" description="ANK 16">
    <location>
        <begin position="862"/>
        <end position="891"/>
    </location>
</feature>
<feature type="repeat" description="ANK 17">
    <location>
        <begin position="895"/>
        <end position="924"/>
    </location>
</feature>
<feature type="repeat" description="ANK 18">
    <location>
        <begin position="928"/>
        <end position="957"/>
    </location>
</feature>
<feature type="domain" description="SAM" evidence="2">
    <location>
        <begin position="1019"/>
        <end position="1082"/>
    </location>
</feature>
<feature type="domain" description="PARP catalytic" evidence="3">
    <location>
        <begin position="1105"/>
        <end position="1310"/>
    </location>
</feature>
<feature type="region of interest" description="Disordered" evidence="4">
    <location>
        <begin position="1"/>
        <end position="88"/>
    </location>
</feature>
<feature type="region of interest" description="Disordered" evidence="4">
    <location>
        <begin position="111"/>
        <end position="152"/>
    </location>
</feature>
<feature type="compositionally biased region" description="Basic residues" evidence="4">
    <location>
        <begin position="1"/>
        <end position="15"/>
    </location>
</feature>
<feature type="compositionally biased region" description="Pro residues" evidence="4">
    <location>
        <begin position="25"/>
        <end position="46"/>
    </location>
</feature>
<feature type="compositionally biased region" description="Basic and acidic residues" evidence="4">
    <location>
        <begin position="69"/>
        <end position="82"/>
    </location>
</feature>
<feature type="compositionally biased region" description="Low complexity" evidence="4">
    <location>
        <begin position="120"/>
        <end position="152"/>
    </location>
</feature>
<feature type="binding site" evidence="1">
    <location>
        <position position="1227"/>
    </location>
    <ligand>
        <name>Zn(2+)</name>
        <dbReference type="ChEBI" id="CHEBI:29105"/>
    </ligand>
</feature>
<feature type="binding site" evidence="1">
    <location>
        <position position="1230"/>
    </location>
    <ligand>
        <name>Zn(2+)</name>
        <dbReference type="ChEBI" id="CHEBI:29105"/>
    </ligand>
</feature>
<feature type="binding site" evidence="1">
    <location>
        <position position="1235"/>
    </location>
    <ligand>
        <name>Zn(2+)</name>
        <dbReference type="ChEBI" id="CHEBI:29105"/>
    </ligand>
</feature>
<feature type="binding site" evidence="1">
    <location>
        <position position="1238"/>
    </location>
    <ligand>
        <name>Zn(2+)</name>
        <dbReference type="ChEBI" id="CHEBI:29105"/>
    </ligand>
</feature>
<feature type="splice variant" id="VSP_041320" description="In isoform 2." evidence="5">
    <location>
        <begin position="1"/>
        <end position="344"/>
    </location>
</feature>
<feature type="sequence conflict" description="In Ref. 1; BAC33475." evidence="6" ref="1">
    <original>L</original>
    <variation>V</variation>
    <location>
        <position position="969"/>
    </location>
</feature>
<feature type="sequence conflict" description="In Ref. 1; BAC33475." evidence="6" ref="1">
    <original>S</original>
    <variation>I</variation>
    <location>
        <position position="1025"/>
    </location>
</feature>
<feature type="helix" evidence="8">
    <location>
        <begin position="317"/>
        <end position="338"/>
    </location>
</feature>
<feature type="helix" evidence="8">
    <location>
        <begin position="341"/>
        <end position="347"/>
    </location>
</feature>
<feature type="turn" evidence="8">
    <location>
        <begin position="350"/>
        <end position="354"/>
    </location>
</feature>
<feature type="helix" evidence="8">
    <location>
        <begin position="365"/>
        <end position="371"/>
    </location>
</feature>
<feature type="helix" evidence="8">
    <location>
        <begin position="375"/>
        <end position="383"/>
    </location>
</feature>
<feature type="helix" evidence="8">
    <location>
        <begin position="398"/>
        <end position="404"/>
    </location>
</feature>
<feature type="helix" evidence="8">
    <location>
        <begin position="408"/>
        <end position="416"/>
    </location>
</feature>
<feature type="helix" evidence="8">
    <location>
        <begin position="431"/>
        <end position="437"/>
    </location>
</feature>
<feature type="helix" evidence="8">
    <location>
        <begin position="441"/>
        <end position="449"/>
    </location>
</feature>
<feature type="helix" evidence="8">
    <location>
        <begin position="464"/>
        <end position="467"/>
    </location>
</feature>
<feature type="helix" evidence="8">
    <location>
        <begin position="471"/>
        <end position="491"/>
    </location>
</feature>
<feature type="helix" evidence="8">
    <location>
        <begin position="495"/>
        <end position="501"/>
    </location>
</feature>
<feature type="turn" evidence="8">
    <location>
        <begin position="502"/>
        <end position="504"/>
    </location>
</feature>
<feature type="turn" evidence="8">
    <location>
        <begin position="512"/>
        <end position="514"/>
    </location>
</feature>
<feature type="helix" evidence="8">
    <location>
        <begin position="518"/>
        <end position="524"/>
    </location>
</feature>
<feature type="helix" evidence="8">
    <location>
        <begin position="530"/>
        <end position="539"/>
    </location>
</feature>
<feature type="helix" evidence="8">
    <location>
        <begin position="554"/>
        <end position="560"/>
    </location>
</feature>
<feature type="helix" evidence="8">
    <location>
        <begin position="564"/>
        <end position="572"/>
    </location>
</feature>
<feature type="helix" evidence="8">
    <location>
        <begin position="587"/>
        <end position="593"/>
    </location>
</feature>
<feature type="helix" evidence="8">
    <location>
        <begin position="597"/>
        <end position="605"/>
    </location>
</feature>
<feature type="helix" evidence="8">
    <location>
        <begin position="620"/>
        <end position="623"/>
    </location>
</feature>
<feature type="helix" evidence="8">
    <location>
        <begin position="626"/>
        <end position="633"/>
    </location>
</feature>
<feature type="strand" evidence="7">
    <location>
        <begin position="1100"/>
        <end position="1103"/>
    </location>
</feature>
<feature type="helix" evidence="7">
    <location>
        <begin position="1109"/>
        <end position="1120"/>
    </location>
</feature>
<feature type="turn" evidence="7">
    <location>
        <begin position="1126"/>
        <end position="1132"/>
    </location>
</feature>
<feature type="strand" evidence="7">
    <location>
        <begin position="1138"/>
        <end position="1147"/>
    </location>
</feature>
<feature type="helix" evidence="7">
    <location>
        <begin position="1149"/>
        <end position="1165"/>
    </location>
</feature>
<feature type="strand" evidence="7">
    <location>
        <begin position="1172"/>
        <end position="1177"/>
    </location>
</feature>
<feature type="helix" evidence="7">
    <location>
        <begin position="1182"/>
        <end position="1188"/>
    </location>
</feature>
<feature type="helix" evidence="7">
    <location>
        <begin position="1192"/>
        <end position="1194"/>
    </location>
</feature>
<feature type="strand" evidence="7">
    <location>
        <begin position="1203"/>
        <end position="1209"/>
    </location>
</feature>
<feature type="helix" evidence="7">
    <location>
        <begin position="1211"/>
        <end position="1215"/>
    </location>
</feature>
<feature type="turn" evidence="7">
    <location>
        <begin position="1216"/>
        <end position="1219"/>
    </location>
</feature>
<feature type="helix" evidence="7">
    <location>
        <begin position="1221"/>
        <end position="1223"/>
    </location>
</feature>
<feature type="turn" evidence="7">
    <location>
        <begin position="1228"/>
        <end position="1230"/>
    </location>
</feature>
<feature type="strand" evidence="7">
    <location>
        <begin position="1236"/>
        <end position="1238"/>
    </location>
</feature>
<feature type="strand" evidence="7">
    <location>
        <begin position="1240"/>
        <end position="1248"/>
    </location>
</feature>
<feature type="strand" evidence="7">
    <location>
        <begin position="1251"/>
        <end position="1256"/>
    </location>
</feature>
<feature type="strand" evidence="7">
    <location>
        <begin position="1269"/>
        <end position="1273"/>
    </location>
</feature>
<feature type="strand" evidence="7">
    <location>
        <begin position="1284"/>
        <end position="1288"/>
    </location>
</feature>
<feature type="helix" evidence="7">
    <location>
        <begin position="1290"/>
        <end position="1292"/>
    </location>
</feature>
<feature type="strand" evidence="7">
    <location>
        <begin position="1293"/>
        <end position="1303"/>
    </location>
</feature>
<comment type="function">
    <text evidence="1">Poly-ADP-ribosyltransferase involved in various processes such as Wnt signaling pathway, telomere length and vesicle trafficking. Acts as an activator of the Wnt signaling pathway by mediating poly-ADP-ribosylation (PARsylation) of AXIN1 and AXIN2, 2 key components of the beta-catenin destruction complex: poly-ADP-ribosylated target proteins are recognized by RNF146, which mediates their ubiquitination and subsequent degradation. Also mediates PARsylation of BLZF1 and CASC3, followed by recruitment of RNF146 and subsequent ubiquitination. Mediates PARsylation of TERF1, thereby contributing to the regulation of telomere length. Involved in centrosome maturation during prometaphase by mediating PARsylation of HEPACAM2/MIKI. May also regulate vesicle trafficking and modulate the subcellular distribution of SLC2A4/GLUT4-vesicles. May be involved in spindle pole assembly through PARsylation of NUMA1. Stimulates 26S proteasome activity.</text>
</comment>
<comment type="catalytic activity">
    <reaction evidence="1">
        <text>NAD(+) + (ADP-D-ribosyl)n-acceptor = nicotinamide + (ADP-D-ribosyl)n+1-acceptor + H(+).</text>
        <dbReference type="EC" id="2.4.2.30"/>
    </reaction>
</comment>
<comment type="catalytic activity">
    <reaction evidence="6">
        <text>L-aspartyl-[protein] + NAD(+) = 4-O-(ADP-D-ribosyl)-L-aspartyl-[protein] + nicotinamide</text>
        <dbReference type="Rhea" id="RHEA:54424"/>
        <dbReference type="Rhea" id="RHEA-COMP:9867"/>
        <dbReference type="Rhea" id="RHEA-COMP:13832"/>
        <dbReference type="ChEBI" id="CHEBI:17154"/>
        <dbReference type="ChEBI" id="CHEBI:29961"/>
        <dbReference type="ChEBI" id="CHEBI:57540"/>
        <dbReference type="ChEBI" id="CHEBI:138102"/>
    </reaction>
</comment>
<comment type="catalytic activity">
    <reaction evidence="6">
        <text>L-glutamyl-[protein] + NAD(+) = 5-O-(ADP-D-ribosyl)-L-glutamyl-[protein] + nicotinamide</text>
        <dbReference type="Rhea" id="RHEA:58224"/>
        <dbReference type="Rhea" id="RHEA-COMP:10208"/>
        <dbReference type="Rhea" id="RHEA-COMP:15089"/>
        <dbReference type="ChEBI" id="CHEBI:17154"/>
        <dbReference type="ChEBI" id="CHEBI:29973"/>
        <dbReference type="ChEBI" id="CHEBI:57540"/>
        <dbReference type="ChEBI" id="CHEBI:142540"/>
    </reaction>
</comment>
<comment type="subunit">
    <text evidence="1">Oligomerizes and associates with TNKS2. Interacts with the cytoplasmic domain of LNPEP/Otase in SLC2A4/GLUT4-vesicles. Binds to the N-terminus of telomeric TERF1 via the ANK repeats. Found in a complex with POT1; TERF1 and TINF2. Interacts with AXIN1. Interacts with AXIN2. Interacts with BLZF1 and CASC3. Interacts with NUMA1.</text>
</comment>
<comment type="subcellular location">
    <subcellularLocation>
        <location evidence="1">Cytoplasm</location>
    </subcellularLocation>
    <subcellularLocation>
        <location evidence="1">Golgi apparatus membrane</location>
        <topology evidence="1">Peripheral membrane protein</topology>
    </subcellularLocation>
    <subcellularLocation>
        <location evidence="1">Cytoplasm</location>
        <location evidence="1">Cytoskeleton</location>
        <location evidence="1">Microtubule organizing center</location>
        <location evidence="1">Centrosome</location>
    </subcellularLocation>
    <subcellularLocation>
        <location evidence="1">Nucleus</location>
        <location evidence="1">Nuclear pore complex</location>
    </subcellularLocation>
    <subcellularLocation>
        <location evidence="1">Chromosome</location>
        <location evidence="1">Telomere</location>
    </subcellularLocation>
    <subcellularLocation>
        <location evidence="1">Cytoplasm</location>
        <location evidence="1">Cytoskeleton</location>
        <location evidence="1">Spindle pole</location>
    </subcellularLocation>
    <text evidence="1">Associated with the Golgi and with juxtanuclear SLC2A4/GLUT4-vesicles. A minor proportion is also found at nuclear pore complexes and around the pericentriolar matrix of mitotic centromeres. During interphase, a small fraction of TNKS is found in the nucleus, associated with TERF1. Localizes to spindle poles at mitosis onset via interaction with NUMA1.</text>
</comment>
<comment type="alternative products">
    <event type="alternative splicing"/>
    <isoform>
        <id>Q6PFX9-1</id>
        <name>1</name>
        <sequence type="displayed"/>
    </isoform>
    <isoform>
        <id>Q6PFX9-2</id>
        <name>2</name>
        <sequence type="described" ref="VSP_041320"/>
    </isoform>
</comment>
<comment type="PTM">
    <text evidence="1">Phosphorylated on serine residues by MAPK kinases upon insulin stimulation. Phosphorylated during mitosis.</text>
</comment>
<comment type="PTM">
    <text evidence="1">Ubiquitinated by RNF146 when auto-poly-ADP-ribosylated, leading to its degradation.</text>
</comment>
<comment type="PTM">
    <text evidence="1">ADP-ribosylated (-auto). Poly-ADP-ribosylated protein is recognized by RNF146, followed by ubiquitination.</text>
</comment>
<comment type="similarity">
    <text evidence="6">Belongs to the ARTD/PARP family.</text>
</comment>
<protein>
    <recommendedName>
        <fullName evidence="6">Poly [ADP-ribose] polymerase tankyrase-1</fullName>
        <ecNumber evidence="1">2.4.2.30</ecNumber>
    </recommendedName>
    <alternativeName>
        <fullName>ADP-ribosyltransferase diphtheria toxin-like 5</fullName>
        <shortName>ARTD5</shortName>
    </alternativeName>
    <alternativeName>
        <fullName evidence="6">Protein poly-ADP-ribosyltransferase tankyrase-1</fullName>
        <ecNumber evidence="1">2.4.2.-</ecNumber>
    </alternativeName>
    <alternativeName>
        <fullName>TRF1-interacting ankyrin-related ADP-ribose polymerase 1</fullName>
        <shortName>Tankyrase I</shortName>
    </alternativeName>
    <alternativeName>
        <fullName>Tankyrase-1</fullName>
        <shortName>TANK1</shortName>
    </alternativeName>
</protein>
<name>TNKS1_MOUSE</name>
<dbReference type="EC" id="2.4.2.30" evidence="1"/>
<dbReference type="EC" id="2.4.2.-" evidence="1"/>
<dbReference type="EMBL" id="AK048860">
    <property type="protein sequence ID" value="BAC33475.1"/>
    <property type="molecule type" value="mRNA"/>
</dbReference>
<dbReference type="EMBL" id="AC122458">
    <property type="status" value="NOT_ANNOTATED_CDS"/>
    <property type="molecule type" value="Genomic_DNA"/>
</dbReference>
<dbReference type="EMBL" id="BC057370">
    <property type="protein sequence ID" value="AAH57370.1"/>
    <property type="molecule type" value="mRNA"/>
</dbReference>
<dbReference type="CCDS" id="CCDS22242.1">
    <molecule id="Q6PFX9-1"/>
</dbReference>
<dbReference type="RefSeq" id="NP_780300.2">
    <molecule id="Q6PFX9-1"/>
    <property type="nucleotide sequence ID" value="NM_175091.3"/>
</dbReference>
<dbReference type="PDB" id="3UTM">
    <property type="method" value="X-ray"/>
    <property type="resolution" value="2.00 A"/>
    <property type="chains" value="A/B=308-655"/>
</dbReference>
<dbReference type="PDB" id="4N4T">
    <property type="method" value="X-ray"/>
    <property type="resolution" value="2.32 A"/>
    <property type="chains" value="A/B=1097-1307"/>
</dbReference>
<dbReference type="PDB" id="5HKP">
    <property type="method" value="X-ray"/>
    <property type="resolution" value="2.20 A"/>
    <property type="chains" value="A/B=308-655"/>
</dbReference>
<dbReference type="PDB" id="6CF6">
    <property type="method" value="X-ray"/>
    <property type="resolution" value="1.93 A"/>
    <property type="chains" value="A/B=308-655"/>
</dbReference>
<dbReference type="PDBsum" id="3UTM"/>
<dbReference type="PDBsum" id="4N4T"/>
<dbReference type="PDBsum" id="5HKP"/>
<dbReference type="PDBsum" id="6CF6"/>
<dbReference type="SMR" id="Q6PFX9"/>
<dbReference type="BioGRID" id="204263">
    <property type="interactions" value="22"/>
</dbReference>
<dbReference type="DIP" id="DIP-61463N"/>
<dbReference type="FunCoup" id="Q6PFX9">
    <property type="interactions" value="4739"/>
</dbReference>
<dbReference type="IntAct" id="Q6PFX9">
    <property type="interactions" value="21"/>
</dbReference>
<dbReference type="MINT" id="Q6PFX9"/>
<dbReference type="STRING" id="10090.ENSMUSP00000033929"/>
<dbReference type="BindingDB" id="Q6PFX9"/>
<dbReference type="ChEMBL" id="CHEMBL3232702"/>
<dbReference type="GlyGen" id="Q6PFX9">
    <property type="glycosylation" value="6 sites, 1 O-linked glycan (1 site)"/>
</dbReference>
<dbReference type="iPTMnet" id="Q6PFX9"/>
<dbReference type="PhosphoSitePlus" id="Q6PFX9"/>
<dbReference type="PaxDb" id="10090-ENSMUSP00000033929"/>
<dbReference type="PeptideAtlas" id="Q6PFX9"/>
<dbReference type="ProteomicsDB" id="258936">
    <molecule id="Q6PFX9-1"/>
</dbReference>
<dbReference type="ProteomicsDB" id="258937">
    <molecule id="Q6PFX9-2"/>
</dbReference>
<dbReference type="Antibodypedia" id="22078">
    <property type="antibodies" value="378 antibodies from 35 providers"/>
</dbReference>
<dbReference type="DNASU" id="21951"/>
<dbReference type="Ensembl" id="ENSMUST00000033929.6">
    <molecule id="Q6PFX9-1"/>
    <property type="protein sequence ID" value="ENSMUSP00000033929.5"/>
    <property type="gene ID" value="ENSMUSG00000031529.6"/>
</dbReference>
<dbReference type="GeneID" id="21951"/>
<dbReference type="KEGG" id="mmu:21951"/>
<dbReference type="UCSC" id="uc009lku.1">
    <molecule id="Q6PFX9-1"/>
    <property type="organism name" value="mouse"/>
</dbReference>
<dbReference type="AGR" id="MGI:1341087"/>
<dbReference type="CTD" id="8658"/>
<dbReference type="MGI" id="MGI:1341087">
    <property type="gene designation" value="Tnks"/>
</dbReference>
<dbReference type="VEuPathDB" id="HostDB:ENSMUSG00000031529"/>
<dbReference type="eggNOG" id="KOG4177">
    <property type="taxonomic scope" value="Eukaryota"/>
</dbReference>
<dbReference type="GeneTree" id="ENSGT00940000156161"/>
<dbReference type="HOGENOM" id="CLU_004303_0_0_1"/>
<dbReference type="InParanoid" id="Q6PFX9"/>
<dbReference type="OMA" id="TAETINC"/>
<dbReference type="OrthoDB" id="4772757at2759"/>
<dbReference type="PhylomeDB" id="Q6PFX9"/>
<dbReference type="TreeFam" id="TF326036"/>
<dbReference type="Reactome" id="R-MMU-201681">
    <property type="pathway name" value="TCF dependent signaling in response to WNT"/>
</dbReference>
<dbReference type="Reactome" id="R-MMU-4641257">
    <property type="pathway name" value="Degradation of AXIN"/>
</dbReference>
<dbReference type="Reactome" id="R-MMU-5689880">
    <property type="pathway name" value="Ub-specific processing proteases"/>
</dbReference>
<dbReference type="Reactome" id="R-MMU-8948751">
    <property type="pathway name" value="Regulation of PTEN stability and activity"/>
</dbReference>
<dbReference type="BioGRID-ORCS" id="21951">
    <property type="hits" value="2 hits in 78 CRISPR screens"/>
</dbReference>
<dbReference type="ChiTaRS" id="Tnks">
    <property type="organism name" value="mouse"/>
</dbReference>
<dbReference type="EvolutionaryTrace" id="Q6PFX9"/>
<dbReference type="PRO" id="PR:Q6PFX9"/>
<dbReference type="Proteomes" id="UP000000589">
    <property type="component" value="Chromosome 8"/>
</dbReference>
<dbReference type="RNAct" id="Q6PFX9">
    <property type="molecule type" value="protein"/>
</dbReference>
<dbReference type="Bgee" id="ENSMUSG00000031529">
    <property type="expression patterns" value="Expressed in manus and 234 other cell types or tissues"/>
</dbReference>
<dbReference type="ExpressionAtlas" id="Q6PFX9">
    <property type="expression patterns" value="baseline and differential"/>
</dbReference>
<dbReference type="GO" id="GO:0005813">
    <property type="term" value="C:centrosome"/>
    <property type="evidence" value="ECO:0007669"/>
    <property type="project" value="UniProtKB-SubCell"/>
</dbReference>
<dbReference type="GO" id="GO:0000781">
    <property type="term" value="C:chromosome, telomeric region"/>
    <property type="evidence" value="ECO:0007669"/>
    <property type="project" value="UniProtKB-SubCell"/>
</dbReference>
<dbReference type="GO" id="GO:0005829">
    <property type="term" value="C:cytosol"/>
    <property type="evidence" value="ECO:0000314"/>
    <property type="project" value="MGI"/>
</dbReference>
<dbReference type="GO" id="GO:0005794">
    <property type="term" value="C:Golgi apparatus"/>
    <property type="evidence" value="ECO:0000250"/>
    <property type="project" value="UniProtKB"/>
</dbReference>
<dbReference type="GO" id="GO:0000139">
    <property type="term" value="C:Golgi membrane"/>
    <property type="evidence" value="ECO:0007669"/>
    <property type="project" value="UniProtKB-SubCell"/>
</dbReference>
<dbReference type="GO" id="GO:0097431">
    <property type="term" value="C:mitotic spindle pole"/>
    <property type="evidence" value="ECO:0000250"/>
    <property type="project" value="UniProtKB"/>
</dbReference>
<dbReference type="GO" id="GO:0016604">
    <property type="term" value="C:nuclear body"/>
    <property type="evidence" value="ECO:0007669"/>
    <property type="project" value="Ensembl"/>
</dbReference>
<dbReference type="GO" id="GO:0031965">
    <property type="term" value="C:nuclear membrane"/>
    <property type="evidence" value="ECO:0007669"/>
    <property type="project" value="Ensembl"/>
</dbReference>
<dbReference type="GO" id="GO:0005643">
    <property type="term" value="C:nuclear pore"/>
    <property type="evidence" value="ECO:0007669"/>
    <property type="project" value="UniProtKB-SubCell"/>
</dbReference>
<dbReference type="GO" id="GO:0042393">
    <property type="term" value="F:histone binding"/>
    <property type="evidence" value="ECO:0007669"/>
    <property type="project" value="Ensembl"/>
</dbReference>
<dbReference type="GO" id="GO:0003950">
    <property type="term" value="F:NAD+ poly-ADP-ribosyltransferase activity"/>
    <property type="evidence" value="ECO:0000250"/>
    <property type="project" value="UniProtKB"/>
</dbReference>
<dbReference type="GO" id="GO:1990404">
    <property type="term" value="F:NAD+-protein mono-ADP-ribosyltransferase activity"/>
    <property type="evidence" value="ECO:0000250"/>
    <property type="project" value="UniProtKB"/>
</dbReference>
<dbReference type="GO" id="GO:0140806">
    <property type="term" value="F:NAD+-protein-aspartate ADP-ribosyltransferase activity"/>
    <property type="evidence" value="ECO:0007669"/>
    <property type="project" value="RHEA"/>
</dbReference>
<dbReference type="GO" id="GO:0140807">
    <property type="term" value="F:NAD+-protein-glutamate ADP-ribosyltransferase activity"/>
    <property type="evidence" value="ECO:0007669"/>
    <property type="project" value="RHEA"/>
</dbReference>
<dbReference type="GO" id="GO:0016779">
    <property type="term" value="F:nucleotidyltransferase activity"/>
    <property type="evidence" value="ECO:0007669"/>
    <property type="project" value="UniProtKB-KW"/>
</dbReference>
<dbReference type="GO" id="GO:0008270">
    <property type="term" value="F:zinc ion binding"/>
    <property type="evidence" value="ECO:0007669"/>
    <property type="project" value="Ensembl"/>
</dbReference>
<dbReference type="GO" id="GO:0051301">
    <property type="term" value="P:cell division"/>
    <property type="evidence" value="ECO:0007669"/>
    <property type="project" value="UniProtKB-KW"/>
</dbReference>
<dbReference type="GO" id="GO:0051028">
    <property type="term" value="P:mRNA transport"/>
    <property type="evidence" value="ECO:0007669"/>
    <property type="project" value="UniProtKB-KW"/>
</dbReference>
<dbReference type="GO" id="GO:1904908">
    <property type="term" value="P:negative regulation of maintenance of mitotic sister chromatid cohesion, telomeric"/>
    <property type="evidence" value="ECO:0007669"/>
    <property type="project" value="Ensembl"/>
</dbReference>
<dbReference type="GO" id="GO:1904357">
    <property type="term" value="P:negative regulation of telomere maintenance via telomere lengthening"/>
    <property type="evidence" value="ECO:0007669"/>
    <property type="project" value="Ensembl"/>
</dbReference>
<dbReference type="GO" id="GO:0090263">
    <property type="term" value="P:positive regulation of canonical Wnt signaling pathway"/>
    <property type="evidence" value="ECO:0000250"/>
    <property type="project" value="UniProtKB"/>
</dbReference>
<dbReference type="GO" id="GO:1904355">
    <property type="term" value="P:positive regulation of telomere capping"/>
    <property type="evidence" value="ECO:0007669"/>
    <property type="project" value="Ensembl"/>
</dbReference>
<dbReference type="GO" id="GO:0032212">
    <property type="term" value="P:positive regulation of telomere maintenance via telomerase"/>
    <property type="evidence" value="ECO:0007669"/>
    <property type="project" value="Ensembl"/>
</dbReference>
<dbReference type="GO" id="GO:0045944">
    <property type="term" value="P:positive regulation of transcription by RNA polymerase II"/>
    <property type="evidence" value="ECO:0007669"/>
    <property type="project" value="Ensembl"/>
</dbReference>
<dbReference type="GO" id="GO:0070213">
    <property type="term" value="P:protein auto-ADP-ribosylation"/>
    <property type="evidence" value="ECO:0000250"/>
    <property type="project" value="UniProtKB"/>
</dbReference>
<dbReference type="GO" id="GO:0070198">
    <property type="term" value="P:protein localization to chromosome, telomeric region"/>
    <property type="evidence" value="ECO:0007669"/>
    <property type="project" value="Ensembl"/>
</dbReference>
<dbReference type="GO" id="GO:0070212">
    <property type="term" value="P:protein poly-ADP-ribosylation"/>
    <property type="evidence" value="ECO:0000250"/>
    <property type="project" value="UniProtKB"/>
</dbReference>
<dbReference type="GO" id="GO:0000209">
    <property type="term" value="P:protein polyubiquitination"/>
    <property type="evidence" value="ECO:0000250"/>
    <property type="project" value="UniProtKB"/>
</dbReference>
<dbReference type="GO" id="GO:0015031">
    <property type="term" value="P:protein transport"/>
    <property type="evidence" value="ECO:0007669"/>
    <property type="project" value="UniProtKB-KW"/>
</dbReference>
<dbReference type="GO" id="GO:0016055">
    <property type="term" value="P:Wnt signaling pathway"/>
    <property type="evidence" value="ECO:0007669"/>
    <property type="project" value="UniProtKB-KW"/>
</dbReference>
<dbReference type="CDD" id="cd09524">
    <property type="entry name" value="SAM_tankyrase1_2"/>
    <property type="match status" value="1"/>
</dbReference>
<dbReference type="CDD" id="cd01438">
    <property type="entry name" value="tankyrase_like"/>
    <property type="match status" value="1"/>
</dbReference>
<dbReference type="FunFam" id="1.10.150.50:FF:000012">
    <property type="entry name" value="Poly [ADP-ribose] polymerase"/>
    <property type="match status" value="1"/>
</dbReference>
<dbReference type="FunFam" id="1.25.40.20:FF:000009">
    <property type="entry name" value="Poly [ADP-ribose] polymerase"/>
    <property type="match status" value="1"/>
</dbReference>
<dbReference type="FunFam" id="1.25.40.20:FF:000010">
    <property type="entry name" value="Poly [ADP-ribose] polymerase"/>
    <property type="match status" value="1"/>
</dbReference>
<dbReference type="FunFam" id="1.25.40.20:FF:000011">
    <property type="entry name" value="Poly [ADP-ribose] polymerase"/>
    <property type="match status" value="1"/>
</dbReference>
<dbReference type="FunFam" id="1.25.40.20:FF:000021">
    <property type="entry name" value="Poly [ADP-ribose] polymerase"/>
    <property type="match status" value="1"/>
</dbReference>
<dbReference type="FunFam" id="1.25.40.20:FF:000024">
    <property type="entry name" value="Poly [ADP-ribose] polymerase"/>
    <property type="match status" value="1"/>
</dbReference>
<dbReference type="FunFam" id="3.90.228.10:FF:000001">
    <property type="entry name" value="Poly [ADP-ribose] polymerase tankyrase-2"/>
    <property type="match status" value="1"/>
</dbReference>
<dbReference type="Gene3D" id="3.90.228.10">
    <property type="match status" value="1"/>
</dbReference>
<dbReference type="Gene3D" id="6.20.320.10">
    <property type="match status" value="1"/>
</dbReference>
<dbReference type="Gene3D" id="1.25.40.20">
    <property type="entry name" value="Ankyrin repeat-containing domain"/>
    <property type="match status" value="5"/>
</dbReference>
<dbReference type="Gene3D" id="1.10.150.50">
    <property type="entry name" value="Transcription Factor, Ets-1"/>
    <property type="match status" value="1"/>
</dbReference>
<dbReference type="IDEAL" id="IID50231"/>
<dbReference type="InterPro" id="IPR002110">
    <property type="entry name" value="Ankyrin_rpt"/>
</dbReference>
<dbReference type="InterPro" id="IPR036770">
    <property type="entry name" value="Ankyrin_rpt-contain_sf"/>
</dbReference>
<dbReference type="InterPro" id="IPR012317">
    <property type="entry name" value="Poly(ADP-ribose)pol_cat_dom"/>
</dbReference>
<dbReference type="InterPro" id="IPR001660">
    <property type="entry name" value="SAM"/>
</dbReference>
<dbReference type="InterPro" id="IPR013761">
    <property type="entry name" value="SAM/pointed_sf"/>
</dbReference>
<dbReference type="PANTHER" id="PTHR24171">
    <property type="entry name" value="ANKYRIN REPEAT DOMAIN-CONTAINING PROTEIN 39-RELATED"/>
    <property type="match status" value="1"/>
</dbReference>
<dbReference type="Pfam" id="PF00023">
    <property type="entry name" value="Ank"/>
    <property type="match status" value="4"/>
</dbReference>
<dbReference type="Pfam" id="PF12796">
    <property type="entry name" value="Ank_2"/>
    <property type="match status" value="5"/>
</dbReference>
<dbReference type="Pfam" id="PF00644">
    <property type="entry name" value="PARP"/>
    <property type="match status" value="1"/>
</dbReference>
<dbReference type="Pfam" id="PF07647">
    <property type="entry name" value="SAM_2"/>
    <property type="match status" value="1"/>
</dbReference>
<dbReference type="PRINTS" id="PR01415">
    <property type="entry name" value="ANKYRIN"/>
</dbReference>
<dbReference type="SMART" id="SM00248">
    <property type="entry name" value="ANK"/>
    <property type="match status" value="17"/>
</dbReference>
<dbReference type="SMART" id="SM00454">
    <property type="entry name" value="SAM"/>
    <property type="match status" value="1"/>
</dbReference>
<dbReference type="SUPFAM" id="SSF56399">
    <property type="entry name" value="ADP-ribosylation"/>
    <property type="match status" value="1"/>
</dbReference>
<dbReference type="SUPFAM" id="SSF48403">
    <property type="entry name" value="Ankyrin repeat"/>
    <property type="match status" value="3"/>
</dbReference>
<dbReference type="SUPFAM" id="SSF47769">
    <property type="entry name" value="SAM/Pointed domain"/>
    <property type="match status" value="1"/>
</dbReference>
<dbReference type="PROSITE" id="PS50297">
    <property type="entry name" value="ANK_REP_REGION"/>
    <property type="match status" value="1"/>
</dbReference>
<dbReference type="PROSITE" id="PS50088">
    <property type="entry name" value="ANK_REPEAT"/>
    <property type="match status" value="15"/>
</dbReference>
<dbReference type="PROSITE" id="PS51059">
    <property type="entry name" value="PARP_CATALYTIC"/>
    <property type="match status" value="1"/>
</dbReference>
<dbReference type="PROSITE" id="PS50105">
    <property type="entry name" value="SAM_DOMAIN"/>
    <property type="match status" value="1"/>
</dbReference>
<accession>Q6PFX9</accession>
<accession>Q8BX62</accession>
<reference key="1">
    <citation type="journal article" date="2005" name="Science">
        <title>The transcriptional landscape of the mammalian genome.</title>
        <authorList>
            <person name="Carninci P."/>
            <person name="Kasukawa T."/>
            <person name="Katayama S."/>
            <person name="Gough J."/>
            <person name="Frith M.C."/>
            <person name="Maeda N."/>
            <person name="Oyama R."/>
            <person name="Ravasi T."/>
            <person name="Lenhard B."/>
            <person name="Wells C."/>
            <person name="Kodzius R."/>
            <person name="Shimokawa K."/>
            <person name="Bajic V.B."/>
            <person name="Brenner S.E."/>
            <person name="Batalov S."/>
            <person name="Forrest A.R."/>
            <person name="Zavolan M."/>
            <person name="Davis M.J."/>
            <person name="Wilming L.G."/>
            <person name="Aidinis V."/>
            <person name="Allen J.E."/>
            <person name="Ambesi-Impiombato A."/>
            <person name="Apweiler R."/>
            <person name="Aturaliya R.N."/>
            <person name="Bailey T.L."/>
            <person name="Bansal M."/>
            <person name="Baxter L."/>
            <person name="Beisel K.W."/>
            <person name="Bersano T."/>
            <person name="Bono H."/>
            <person name="Chalk A.M."/>
            <person name="Chiu K.P."/>
            <person name="Choudhary V."/>
            <person name="Christoffels A."/>
            <person name="Clutterbuck D.R."/>
            <person name="Crowe M.L."/>
            <person name="Dalla E."/>
            <person name="Dalrymple B.P."/>
            <person name="de Bono B."/>
            <person name="Della Gatta G."/>
            <person name="di Bernardo D."/>
            <person name="Down T."/>
            <person name="Engstrom P."/>
            <person name="Fagiolini M."/>
            <person name="Faulkner G."/>
            <person name="Fletcher C.F."/>
            <person name="Fukushima T."/>
            <person name="Furuno M."/>
            <person name="Futaki S."/>
            <person name="Gariboldi M."/>
            <person name="Georgii-Hemming P."/>
            <person name="Gingeras T.R."/>
            <person name="Gojobori T."/>
            <person name="Green R.E."/>
            <person name="Gustincich S."/>
            <person name="Harbers M."/>
            <person name="Hayashi Y."/>
            <person name="Hensch T.K."/>
            <person name="Hirokawa N."/>
            <person name="Hill D."/>
            <person name="Huminiecki L."/>
            <person name="Iacono M."/>
            <person name="Ikeo K."/>
            <person name="Iwama A."/>
            <person name="Ishikawa T."/>
            <person name="Jakt M."/>
            <person name="Kanapin A."/>
            <person name="Katoh M."/>
            <person name="Kawasawa Y."/>
            <person name="Kelso J."/>
            <person name="Kitamura H."/>
            <person name="Kitano H."/>
            <person name="Kollias G."/>
            <person name="Krishnan S.P."/>
            <person name="Kruger A."/>
            <person name="Kummerfeld S.K."/>
            <person name="Kurochkin I.V."/>
            <person name="Lareau L.F."/>
            <person name="Lazarevic D."/>
            <person name="Lipovich L."/>
            <person name="Liu J."/>
            <person name="Liuni S."/>
            <person name="McWilliam S."/>
            <person name="Madan Babu M."/>
            <person name="Madera M."/>
            <person name="Marchionni L."/>
            <person name="Matsuda H."/>
            <person name="Matsuzawa S."/>
            <person name="Miki H."/>
            <person name="Mignone F."/>
            <person name="Miyake S."/>
            <person name="Morris K."/>
            <person name="Mottagui-Tabar S."/>
            <person name="Mulder N."/>
            <person name="Nakano N."/>
            <person name="Nakauchi H."/>
            <person name="Ng P."/>
            <person name="Nilsson R."/>
            <person name="Nishiguchi S."/>
            <person name="Nishikawa S."/>
            <person name="Nori F."/>
            <person name="Ohara O."/>
            <person name="Okazaki Y."/>
            <person name="Orlando V."/>
            <person name="Pang K.C."/>
            <person name="Pavan W.J."/>
            <person name="Pavesi G."/>
            <person name="Pesole G."/>
            <person name="Petrovsky N."/>
            <person name="Piazza S."/>
            <person name="Reed J."/>
            <person name="Reid J.F."/>
            <person name="Ring B.Z."/>
            <person name="Ringwald M."/>
            <person name="Rost B."/>
            <person name="Ruan Y."/>
            <person name="Salzberg S.L."/>
            <person name="Sandelin A."/>
            <person name="Schneider C."/>
            <person name="Schoenbach C."/>
            <person name="Sekiguchi K."/>
            <person name="Semple C.A."/>
            <person name="Seno S."/>
            <person name="Sessa L."/>
            <person name="Sheng Y."/>
            <person name="Shibata Y."/>
            <person name="Shimada H."/>
            <person name="Shimada K."/>
            <person name="Silva D."/>
            <person name="Sinclair B."/>
            <person name="Sperling S."/>
            <person name="Stupka E."/>
            <person name="Sugiura K."/>
            <person name="Sultana R."/>
            <person name="Takenaka Y."/>
            <person name="Taki K."/>
            <person name="Tammoja K."/>
            <person name="Tan S.L."/>
            <person name="Tang S."/>
            <person name="Taylor M.S."/>
            <person name="Tegner J."/>
            <person name="Teichmann S.A."/>
            <person name="Ueda H.R."/>
            <person name="van Nimwegen E."/>
            <person name="Verardo R."/>
            <person name="Wei C.L."/>
            <person name="Yagi K."/>
            <person name="Yamanishi H."/>
            <person name="Zabarovsky E."/>
            <person name="Zhu S."/>
            <person name="Zimmer A."/>
            <person name="Hide W."/>
            <person name="Bult C."/>
            <person name="Grimmond S.M."/>
            <person name="Teasdale R.D."/>
            <person name="Liu E.T."/>
            <person name="Brusic V."/>
            <person name="Quackenbush J."/>
            <person name="Wahlestedt C."/>
            <person name="Mattick J.S."/>
            <person name="Hume D.A."/>
            <person name="Kai C."/>
            <person name="Sasaki D."/>
            <person name="Tomaru Y."/>
            <person name="Fukuda S."/>
            <person name="Kanamori-Katayama M."/>
            <person name="Suzuki M."/>
            <person name="Aoki J."/>
            <person name="Arakawa T."/>
            <person name="Iida J."/>
            <person name="Imamura K."/>
            <person name="Itoh M."/>
            <person name="Kato T."/>
            <person name="Kawaji H."/>
            <person name="Kawagashira N."/>
            <person name="Kawashima T."/>
            <person name="Kojima M."/>
            <person name="Kondo S."/>
            <person name="Konno H."/>
            <person name="Nakano K."/>
            <person name="Ninomiya N."/>
            <person name="Nishio T."/>
            <person name="Okada M."/>
            <person name="Plessy C."/>
            <person name="Shibata K."/>
            <person name="Shiraki T."/>
            <person name="Suzuki S."/>
            <person name="Tagami M."/>
            <person name="Waki K."/>
            <person name="Watahiki A."/>
            <person name="Okamura-Oho Y."/>
            <person name="Suzuki H."/>
            <person name="Kawai J."/>
            <person name="Hayashizaki Y."/>
        </authorList>
    </citation>
    <scope>NUCLEOTIDE SEQUENCE [LARGE SCALE MRNA] (ISOFORM 2)</scope>
    <source>
        <strain>C57BL/6J</strain>
        <tissue>Cerebellum</tissue>
    </source>
</reference>
<reference key="2">
    <citation type="journal article" date="2009" name="PLoS Biol.">
        <title>Lineage-specific biology revealed by a finished genome assembly of the mouse.</title>
        <authorList>
            <person name="Church D.M."/>
            <person name="Goodstadt L."/>
            <person name="Hillier L.W."/>
            <person name="Zody M.C."/>
            <person name="Goldstein S."/>
            <person name="She X."/>
            <person name="Bult C.J."/>
            <person name="Agarwala R."/>
            <person name="Cherry J.L."/>
            <person name="DiCuccio M."/>
            <person name="Hlavina W."/>
            <person name="Kapustin Y."/>
            <person name="Meric P."/>
            <person name="Maglott D."/>
            <person name="Birtle Z."/>
            <person name="Marques A.C."/>
            <person name="Graves T."/>
            <person name="Zhou S."/>
            <person name="Teague B."/>
            <person name="Potamousis K."/>
            <person name="Churas C."/>
            <person name="Place M."/>
            <person name="Herschleb J."/>
            <person name="Runnheim R."/>
            <person name="Forrest D."/>
            <person name="Amos-Landgraf J."/>
            <person name="Schwartz D.C."/>
            <person name="Cheng Z."/>
            <person name="Lindblad-Toh K."/>
            <person name="Eichler E.E."/>
            <person name="Ponting C.P."/>
        </authorList>
    </citation>
    <scope>NUCLEOTIDE SEQUENCE [LARGE SCALE GENOMIC DNA]</scope>
    <source>
        <strain>C57BL/6J</strain>
    </source>
</reference>
<reference key="3">
    <citation type="journal article" date="2004" name="Genome Res.">
        <title>The status, quality, and expansion of the NIH full-length cDNA project: the Mammalian Gene Collection (MGC).</title>
        <authorList>
            <consortium name="The MGC Project Team"/>
        </authorList>
    </citation>
    <scope>NUCLEOTIDE SEQUENCE [LARGE SCALE MRNA] (ISOFORM 1)</scope>
    <source>
        <strain>C57BL/6J</strain>
        <tissue>Brain</tissue>
    </source>
</reference>
<gene>
    <name type="primary">Tnks</name>
    <name type="synonym">Tnks1</name>
</gene>
<organism>
    <name type="scientific">Mus musculus</name>
    <name type="common">Mouse</name>
    <dbReference type="NCBI Taxonomy" id="10090"/>
    <lineage>
        <taxon>Eukaryota</taxon>
        <taxon>Metazoa</taxon>
        <taxon>Chordata</taxon>
        <taxon>Craniata</taxon>
        <taxon>Vertebrata</taxon>
        <taxon>Euteleostomi</taxon>
        <taxon>Mammalia</taxon>
        <taxon>Eutheria</taxon>
        <taxon>Euarchontoglires</taxon>
        <taxon>Glires</taxon>
        <taxon>Rodentia</taxon>
        <taxon>Myomorpha</taxon>
        <taxon>Muroidea</taxon>
        <taxon>Muridae</taxon>
        <taxon>Murinae</taxon>
        <taxon>Mus</taxon>
        <taxon>Mus</taxon>
    </lineage>
</organism>
<evidence type="ECO:0000250" key="1">
    <source>
        <dbReference type="UniProtKB" id="O95271"/>
    </source>
</evidence>
<evidence type="ECO:0000255" key="2">
    <source>
        <dbReference type="PROSITE-ProRule" id="PRU00184"/>
    </source>
</evidence>
<evidence type="ECO:0000255" key="3">
    <source>
        <dbReference type="PROSITE-ProRule" id="PRU00397"/>
    </source>
</evidence>
<evidence type="ECO:0000256" key="4">
    <source>
        <dbReference type="SAM" id="MobiDB-lite"/>
    </source>
</evidence>
<evidence type="ECO:0000303" key="5">
    <source>
    </source>
</evidence>
<evidence type="ECO:0000305" key="6"/>
<evidence type="ECO:0007829" key="7">
    <source>
        <dbReference type="PDB" id="4N4T"/>
    </source>
</evidence>
<evidence type="ECO:0007829" key="8">
    <source>
        <dbReference type="PDB" id="6CF6"/>
    </source>
</evidence>
<sequence length="1320" mass="140944">MAASRRSQHHHHHHQQQLQPAPGASAPPPPPPPPLSPGLAPGPTPASPTAGGLAPFASPRHGLALPEGDGSRDPPDRPRSPDPVDGAVCTVAAPAAVPAASAAVGVAPTPAGGGGGGGNNSASSASSPTSSSSSSPSSPGSSLAESPEAAGVGSTATLGAGAAGLGPGVPAVSGALRELLEACRNGDVSRVKRLVDAANVNAKDMAGRKSSPLHFAAGFGRKDVVEHLLQMGANVHARDDGGLIPLHNACSFGHAEVVSLLLCQGADPNARDNWNYTPLHEAAIKGKIDVCIVLLQHGADPNIRNTDGKSALDLADPSAKAVLTGEYKKDELLEAARSGNEEKLMALLTPLNVNCHASDGRKSTPLHLAAGYNRVRIVQLLLQHGADVHAKDKGGLVPLHNACSYGHYEVTELLLKHGACVNAMDLWQFTPLHEAASKNRVEVCSLLLSHGADPTLVNCHGKSAVDMAPTPELRERLTYEFKGHSLLQAAREADLAKVKKTLALEIINFKQPQSHETALHCAVASLHPKRKQVAELLLRKGANVNEKNKDFMTPLHVAAERAHNDVMEVLHKHGAKMNALDSLGQTALHRAALAGHLQTCRLLLSYGSDPSIISLQGFTAAQMGNEAVQQILSESTPMRTSDVDYRLLEASKAGDLETVKQLCSPQNVNCRDLEGRHSTPLHFAAGYNRVSVVEYLLHHGADVHAKDKGGLVPLHNACSYGHYEVAELLVRHGASVNVADLWKFTPLHEAAAKGKYEICKLLLKHGADPTKKNRDGNTPLDLVKEGDTDIQDLLRGDAALLDAAKKGCLARVQKLCTPENINCRDTQGRNSTPLHLAAGYNNLEVAEYLLEHGADVNAQDKGGLIPLHNAASYGHVDIAALLIKYNTCVNATDKWAFTPLHEAAQKGRTQLCALLLAHGADPTMKNQEGQTPLDLATADDIRALLIDAMPPEALPTCFKPQATVVSASLISPASTPSCLSAASSIDNLTGPLTDLAVGGASNAGDGAAGAERKEGEVAGLDMNISQFLKSLGLEHLRDIFETEQITLDVLADMGHEELKEIGINAYGHRHKLIKGVERLLGGQQGTNPYLTFHCVNQGTILLDLAPEDKEYQSVEEEMQSTIREHRDGGNAGGIFNRYNVIRIQKVVNKKLRERFCHRQKEVSEENHNHHNERMLFHGSPFINAIIHKGFDERHAYIGGMFGAGIYFAENSSKSNQYVYGIGGGTGCPTHKDRSCYICHRQMLFCRVTLGKSFLQFSTMKMAHAPPGHHSVIGRPSVNGLAYAEYVIYRGEQAYPEYLITYQIMKPEAPSQTATAAEQKT</sequence>
<keyword id="KW-0002">3D-structure</keyword>
<keyword id="KW-0013">ADP-ribosylation</keyword>
<keyword id="KW-0025">Alternative splicing</keyword>
<keyword id="KW-0040">ANK repeat</keyword>
<keyword id="KW-0131">Cell cycle</keyword>
<keyword id="KW-0132">Cell division</keyword>
<keyword id="KW-0158">Chromosome</keyword>
<keyword id="KW-0963">Cytoplasm</keyword>
<keyword id="KW-0206">Cytoskeleton</keyword>
<keyword id="KW-0328">Glycosyltransferase</keyword>
<keyword id="KW-0333">Golgi apparatus</keyword>
<keyword id="KW-0472">Membrane</keyword>
<keyword id="KW-0479">Metal-binding</keyword>
<keyword id="KW-0498">Mitosis</keyword>
<keyword id="KW-0509">mRNA transport</keyword>
<keyword id="KW-0520">NAD</keyword>
<keyword id="KW-0906">Nuclear pore complex</keyword>
<keyword id="KW-0548">Nucleotidyltransferase</keyword>
<keyword id="KW-0539">Nucleus</keyword>
<keyword id="KW-0597">Phosphoprotein</keyword>
<keyword id="KW-0653">Protein transport</keyword>
<keyword id="KW-1185">Reference proteome</keyword>
<keyword id="KW-0677">Repeat</keyword>
<keyword id="KW-0779">Telomere</keyword>
<keyword id="KW-0808">Transferase</keyword>
<keyword id="KW-0811">Translocation</keyword>
<keyword id="KW-0813">Transport</keyword>
<keyword id="KW-0832">Ubl conjugation</keyword>
<keyword id="KW-0879">Wnt signaling pathway</keyword>
<keyword id="KW-0862">Zinc</keyword>
<proteinExistence type="evidence at protein level"/>